<gene>
    <name evidence="1" type="primary">miaB</name>
    <name type="ordered locus">TDE_1576</name>
</gene>
<keyword id="KW-0004">4Fe-4S</keyword>
<keyword id="KW-0963">Cytoplasm</keyword>
<keyword id="KW-0408">Iron</keyword>
<keyword id="KW-0411">Iron-sulfur</keyword>
<keyword id="KW-0479">Metal-binding</keyword>
<keyword id="KW-1185">Reference proteome</keyword>
<keyword id="KW-0949">S-adenosyl-L-methionine</keyword>
<keyword id="KW-0808">Transferase</keyword>
<keyword id="KW-0819">tRNA processing</keyword>
<sequence>MTYFFETYGCQMNQAESSSMEQILLEKGWTNSSDAEHCDLLIINTCSVRITAENRVLGRLGHFSGLKKKRKFFVLLIGCMAERLYTEIQKEFPLIDYVVGMFERNLLPQIFDEIKARLKNDNYMAEFTHDNIEEKPVSGYYFAPLSHSPKSFQSYVPIMNGCNNFCTYCIVPYVRGREVSRPVNEILQEITELSSRGVREITLLGQNVNSYKGEDGEGRLIDFPKLLTLIAREADKTDMIRWIRFMSSHPKDMSDALIDTIAAEKRLCKLVHLPVQHGSDTILKRMNRVYTIEHYKNRIKRLKETIPDIALSTDILMGFPGETEDDVKATLDLMQEIEFDSAFMYHYNPREGTKAFNYPDRIPEEVKIERLGRVIDLQLKITAKKMKAKLGKKVDILVESHSRNERSELFGHTEQGEMTVIQGNPPESLIGNFAHAELKELKGKTFRANLN</sequence>
<accession>Q73MD3</accession>
<feature type="chain" id="PRO_0000374621" description="tRNA-2-methylthio-N(6)-dimethylallyladenosine synthase">
    <location>
        <begin position="1"/>
        <end position="451"/>
    </location>
</feature>
<feature type="domain" description="MTTase N-terminal" evidence="1">
    <location>
        <begin position="1"/>
        <end position="116"/>
    </location>
</feature>
<feature type="domain" description="Radical SAM core" evidence="2">
    <location>
        <begin position="148"/>
        <end position="384"/>
    </location>
</feature>
<feature type="domain" description="TRAM" evidence="1">
    <location>
        <begin position="387"/>
        <end position="451"/>
    </location>
</feature>
<feature type="binding site" evidence="1">
    <location>
        <position position="10"/>
    </location>
    <ligand>
        <name>[4Fe-4S] cluster</name>
        <dbReference type="ChEBI" id="CHEBI:49883"/>
        <label>1</label>
    </ligand>
</feature>
<feature type="binding site" evidence="1">
    <location>
        <position position="46"/>
    </location>
    <ligand>
        <name>[4Fe-4S] cluster</name>
        <dbReference type="ChEBI" id="CHEBI:49883"/>
        <label>1</label>
    </ligand>
</feature>
<feature type="binding site" evidence="1">
    <location>
        <position position="79"/>
    </location>
    <ligand>
        <name>[4Fe-4S] cluster</name>
        <dbReference type="ChEBI" id="CHEBI:49883"/>
        <label>1</label>
    </ligand>
</feature>
<feature type="binding site" evidence="1">
    <location>
        <position position="162"/>
    </location>
    <ligand>
        <name>[4Fe-4S] cluster</name>
        <dbReference type="ChEBI" id="CHEBI:49883"/>
        <label>2</label>
        <note>4Fe-4S-S-AdoMet</note>
    </ligand>
</feature>
<feature type="binding site" evidence="1">
    <location>
        <position position="166"/>
    </location>
    <ligand>
        <name>[4Fe-4S] cluster</name>
        <dbReference type="ChEBI" id="CHEBI:49883"/>
        <label>2</label>
        <note>4Fe-4S-S-AdoMet</note>
    </ligand>
</feature>
<feature type="binding site" evidence="1">
    <location>
        <position position="169"/>
    </location>
    <ligand>
        <name>[4Fe-4S] cluster</name>
        <dbReference type="ChEBI" id="CHEBI:49883"/>
        <label>2</label>
        <note>4Fe-4S-S-AdoMet</note>
    </ligand>
</feature>
<name>MIAB_TREDE</name>
<reference key="1">
    <citation type="journal article" date="2004" name="Proc. Natl. Acad. Sci. U.S.A.">
        <title>Comparison of the genome of the oral pathogen Treponema denticola with other spirochete genomes.</title>
        <authorList>
            <person name="Seshadri R."/>
            <person name="Myers G.S.A."/>
            <person name="Tettelin H."/>
            <person name="Eisen J.A."/>
            <person name="Heidelberg J.F."/>
            <person name="Dodson R.J."/>
            <person name="Davidsen T.M."/>
            <person name="DeBoy R.T."/>
            <person name="Fouts D.E."/>
            <person name="Haft D.H."/>
            <person name="Selengut J."/>
            <person name="Ren Q."/>
            <person name="Brinkac L.M."/>
            <person name="Madupu R."/>
            <person name="Kolonay J.F."/>
            <person name="Durkin S.A."/>
            <person name="Daugherty S.C."/>
            <person name="Shetty J."/>
            <person name="Shvartsbeyn A."/>
            <person name="Gebregeorgis E."/>
            <person name="Geer K."/>
            <person name="Tsegaye G."/>
            <person name="Malek J.A."/>
            <person name="Ayodeji B."/>
            <person name="Shatsman S."/>
            <person name="McLeod M.P."/>
            <person name="Smajs D."/>
            <person name="Howell J.K."/>
            <person name="Pal S."/>
            <person name="Amin A."/>
            <person name="Vashisth P."/>
            <person name="McNeill T.Z."/>
            <person name="Xiang Q."/>
            <person name="Sodergren E."/>
            <person name="Baca E."/>
            <person name="Weinstock G.M."/>
            <person name="Norris S.J."/>
            <person name="Fraser C.M."/>
            <person name="Paulsen I.T."/>
        </authorList>
    </citation>
    <scope>NUCLEOTIDE SEQUENCE [LARGE SCALE GENOMIC DNA]</scope>
    <source>
        <strain>ATCC 35405 / DSM 14222 / CIP 103919 / JCM 8153 / KCTC 15104</strain>
    </source>
</reference>
<protein>
    <recommendedName>
        <fullName evidence="1">tRNA-2-methylthio-N(6)-dimethylallyladenosine synthase</fullName>
        <ecNumber evidence="1">2.8.4.3</ecNumber>
    </recommendedName>
    <alternativeName>
        <fullName evidence="1">(Dimethylallyl)adenosine tRNA methylthiotransferase MiaB</fullName>
    </alternativeName>
    <alternativeName>
        <fullName evidence="1">tRNA-i(6)A37 methylthiotransferase</fullName>
    </alternativeName>
</protein>
<dbReference type="EC" id="2.8.4.3" evidence="1"/>
<dbReference type="EMBL" id="AE017226">
    <property type="protein sequence ID" value="AAS12093.1"/>
    <property type="molecule type" value="Genomic_DNA"/>
</dbReference>
<dbReference type="RefSeq" id="NP_972182.1">
    <property type="nucleotide sequence ID" value="NC_002967.9"/>
</dbReference>
<dbReference type="RefSeq" id="WP_002679246.1">
    <property type="nucleotide sequence ID" value="NC_002967.9"/>
</dbReference>
<dbReference type="SMR" id="Q73MD3"/>
<dbReference type="STRING" id="243275.TDE_1576"/>
<dbReference type="PaxDb" id="243275-TDE_1576"/>
<dbReference type="GeneID" id="2739773"/>
<dbReference type="KEGG" id="tde:TDE_1576"/>
<dbReference type="PATRIC" id="fig|243275.7.peg.1505"/>
<dbReference type="eggNOG" id="COG0621">
    <property type="taxonomic scope" value="Bacteria"/>
</dbReference>
<dbReference type="HOGENOM" id="CLU_018697_2_0_12"/>
<dbReference type="OrthoDB" id="9805215at2"/>
<dbReference type="Proteomes" id="UP000008212">
    <property type="component" value="Chromosome"/>
</dbReference>
<dbReference type="GO" id="GO:0005829">
    <property type="term" value="C:cytosol"/>
    <property type="evidence" value="ECO:0007669"/>
    <property type="project" value="TreeGrafter"/>
</dbReference>
<dbReference type="GO" id="GO:0051539">
    <property type="term" value="F:4 iron, 4 sulfur cluster binding"/>
    <property type="evidence" value="ECO:0007669"/>
    <property type="project" value="UniProtKB-UniRule"/>
</dbReference>
<dbReference type="GO" id="GO:0046872">
    <property type="term" value="F:metal ion binding"/>
    <property type="evidence" value="ECO:0007669"/>
    <property type="project" value="UniProtKB-KW"/>
</dbReference>
<dbReference type="GO" id="GO:0035597">
    <property type="term" value="F:N6-isopentenyladenosine methylthiotransferase activity"/>
    <property type="evidence" value="ECO:0007669"/>
    <property type="project" value="TreeGrafter"/>
</dbReference>
<dbReference type="CDD" id="cd01335">
    <property type="entry name" value="Radical_SAM"/>
    <property type="match status" value="1"/>
</dbReference>
<dbReference type="FunFam" id="3.40.50.12160:FF:000003">
    <property type="entry name" value="CDK5 regulatory subunit-associated protein 1"/>
    <property type="match status" value="1"/>
</dbReference>
<dbReference type="FunFam" id="3.80.30.20:FF:000001">
    <property type="entry name" value="tRNA-2-methylthio-N(6)-dimethylallyladenosine synthase 2"/>
    <property type="match status" value="1"/>
</dbReference>
<dbReference type="Gene3D" id="3.40.50.12160">
    <property type="entry name" value="Methylthiotransferase, N-terminal domain"/>
    <property type="match status" value="1"/>
</dbReference>
<dbReference type="Gene3D" id="3.80.30.20">
    <property type="entry name" value="tm_1862 like domain"/>
    <property type="match status" value="1"/>
</dbReference>
<dbReference type="HAMAP" id="MF_01864">
    <property type="entry name" value="tRNA_metthiotr_MiaB"/>
    <property type="match status" value="1"/>
</dbReference>
<dbReference type="InterPro" id="IPR006638">
    <property type="entry name" value="Elp3/MiaA/NifB-like_rSAM"/>
</dbReference>
<dbReference type="InterPro" id="IPR005839">
    <property type="entry name" value="Methylthiotransferase"/>
</dbReference>
<dbReference type="InterPro" id="IPR020612">
    <property type="entry name" value="Methylthiotransferase_CS"/>
</dbReference>
<dbReference type="InterPro" id="IPR013848">
    <property type="entry name" value="Methylthiotransferase_N"/>
</dbReference>
<dbReference type="InterPro" id="IPR038135">
    <property type="entry name" value="Methylthiotransferase_N_sf"/>
</dbReference>
<dbReference type="InterPro" id="IPR006463">
    <property type="entry name" value="MiaB_methiolase"/>
</dbReference>
<dbReference type="InterPro" id="IPR007197">
    <property type="entry name" value="rSAM"/>
</dbReference>
<dbReference type="InterPro" id="IPR023404">
    <property type="entry name" value="rSAM_horseshoe"/>
</dbReference>
<dbReference type="InterPro" id="IPR002792">
    <property type="entry name" value="TRAM_dom"/>
</dbReference>
<dbReference type="NCBIfam" id="TIGR01574">
    <property type="entry name" value="miaB-methiolase"/>
    <property type="match status" value="1"/>
</dbReference>
<dbReference type="NCBIfam" id="TIGR00089">
    <property type="entry name" value="MiaB/RimO family radical SAM methylthiotransferase"/>
    <property type="match status" value="1"/>
</dbReference>
<dbReference type="PANTHER" id="PTHR43020">
    <property type="entry name" value="CDK5 REGULATORY SUBUNIT-ASSOCIATED PROTEIN 1"/>
    <property type="match status" value="1"/>
</dbReference>
<dbReference type="PANTHER" id="PTHR43020:SF2">
    <property type="entry name" value="MITOCHONDRIAL TRNA METHYLTHIOTRANSFERASE CDK5RAP1"/>
    <property type="match status" value="1"/>
</dbReference>
<dbReference type="Pfam" id="PF04055">
    <property type="entry name" value="Radical_SAM"/>
    <property type="match status" value="1"/>
</dbReference>
<dbReference type="Pfam" id="PF01938">
    <property type="entry name" value="TRAM"/>
    <property type="match status" value="1"/>
</dbReference>
<dbReference type="Pfam" id="PF00919">
    <property type="entry name" value="UPF0004"/>
    <property type="match status" value="1"/>
</dbReference>
<dbReference type="SFLD" id="SFLDF00273">
    <property type="entry name" value="(dimethylallyl)adenosine_tRNA"/>
    <property type="match status" value="1"/>
</dbReference>
<dbReference type="SFLD" id="SFLDG01082">
    <property type="entry name" value="B12-binding_domain_containing"/>
    <property type="match status" value="1"/>
</dbReference>
<dbReference type="SFLD" id="SFLDG01061">
    <property type="entry name" value="methylthiotransferase"/>
    <property type="match status" value="1"/>
</dbReference>
<dbReference type="SMART" id="SM00729">
    <property type="entry name" value="Elp3"/>
    <property type="match status" value="1"/>
</dbReference>
<dbReference type="SUPFAM" id="SSF102114">
    <property type="entry name" value="Radical SAM enzymes"/>
    <property type="match status" value="1"/>
</dbReference>
<dbReference type="PROSITE" id="PS51449">
    <property type="entry name" value="MTTASE_N"/>
    <property type="match status" value="1"/>
</dbReference>
<dbReference type="PROSITE" id="PS01278">
    <property type="entry name" value="MTTASE_RADICAL"/>
    <property type="match status" value="1"/>
</dbReference>
<dbReference type="PROSITE" id="PS51918">
    <property type="entry name" value="RADICAL_SAM"/>
    <property type="match status" value="1"/>
</dbReference>
<dbReference type="PROSITE" id="PS50926">
    <property type="entry name" value="TRAM"/>
    <property type="match status" value="1"/>
</dbReference>
<evidence type="ECO:0000255" key="1">
    <source>
        <dbReference type="HAMAP-Rule" id="MF_01864"/>
    </source>
</evidence>
<evidence type="ECO:0000255" key="2">
    <source>
        <dbReference type="PROSITE-ProRule" id="PRU01266"/>
    </source>
</evidence>
<proteinExistence type="inferred from homology"/>
<comment type="function">
    <text evidence="1">Catalyzes the methylthiolation of N6-(dimethylallyl)adenosine (i(6)A), leading to the formation of 2-methylthio-N6-(dimethylallyl)adenosine (ms(2)i(6)A) at position 37 in tRNAs that read codons beginning with uridine.</text>
</comment>
<comment type="catalytic activity">
    <reaction evidence="1">
        <text>N(6)-dimethylallyladenosine(37) in tRNA + (sulfur carrier)-SH + AH2 + 2 S-adenosyl-L-methionine = 2-methylsulfanyl-N(6)-dimethylallyladenosine(37) in tRNA + (sulfur carrier)-H + 5'-deoxyadenosine + L-methionine + A + S-adenosyl-L-homocysteine + 2 H(+)</text>
        <dbReference type="Rhea" id="RHEA:37067"/>
        <dbReference type="Rhea" id="RHEA-COMP:10375"/>
        <dbReference type="Rhea" id="RHEA-COMP:10376"/>
        <dbReference type="Rhea" id="RHEA-COMP:14737"/>
        <dbReference type="Rhea" id="RHEA-COMP:14739"/>
        <dbReference type="ChEBI" id="CHEBI:13193"/>
        <dbReference type="ChEBI" id="CHEBI:15378"/>
        <dbReference type="ChEBI" id="CHEBI:17319"/>
        <dbReference type="ChEBI" id="CHEBI:17499"/>
        <dbReference type="ChEBI" id="CHEBI:29917"/>
        <dbReference type="ChEBI" id="CHEBI:57844"/>
        <dbReference type="ChEBI" id="CHEBI:57856"/>
        <dbReference type="ChEBI" id="CHEBI:59789"/>
        <dbReference type="ChEBI" id="CHEBI:64428"/>
        <dbReference type="ChEBI" id="CHEBI:74415"/>
        <dbReference type="ChEBI" id="CHEBI:74417"/>
        <dbReference type="EC" id="2.8.4.3"/>
    </reaction>
</comment>
<comment type="cofactor">
    <cofactor evidence="1">
        <name>[4Fe-4S] cluster</name>
        <dbReference type="ChEBI" id="CHEBI:49883"/>
    </cofactor>
    <text evidence="1">Binds 2 [4Fe-4S] clusters. One cluster is coordinated with 3 cysteines and an exchangeable S-adenosyl-L-methionine.</text>
</comment>
<comment type="subunit">
    <text evidence="1">Monomer.</text>
</comment>
<comment type="subcellular location">
    <subcellularLocation>
        <location evidence="1">Cytoplasm</location>
    </subcellularLocation>
</comment>
<comment type="similarity">
    <text evidence="1">Belongs to the methylthiotransferase family. MiaB subfamily.</text>
</comment>
<organism>
    <name type="scientific">Treponema denticola (strain ATCC 35405 / DSM 14222 / CIP 103919 / JCM 8153 / KCTC 15104)</name>
    <dbReference type="NCBI Taxonomy" id="243275"/>
    <lineage>
        <taxon>Bacteria</taxon>
        <taxon>Pseudomonadati</taxon>
        <taxon>Spirochaetota</taxon>
        <taxon>Spirochaetia</taxon>
        <taxon>Spirochaetales</taxon>
        <taxon>Treponemataceae</taxon>
        <taxon>Treponema</taxon>
    </lineage>
</organism>